<accession>Q9N598</accession>
<proteinExistence type="inferred from homology"/>
<gene>
    <name type="ORF">Y110A7A.11</name>
</gene>
<dbReference type="EMBL" id="BX284601">
    <property type="protein sequence ID" value="CCD66202.1"/>
    <property type="molecule type" value="Genomic_DNA"/>
</dbReference>
<dbReference type="SMR" id="Q9N598"/>
<dbReference type="BioGRID" id="37601">
    <property type="interactions" value="1"/>
</dbReference>
<dbReference type="FunCoup" id="Q9N598">
    <property type="interactions" value="2489"/>
</dbReference>
<dbReference type="STRING" id="6239.Y110A7A.11.1"/>
<dbReference type="PaxDb" id="6239-Y110A7A.11"/>
<dbReference type="PeptideAtlas" id="Q9N598"/>
<dbReference type="EnsemblMetazoa" id="Y110A7A.11.1">
    <property type="protein sequence ID" value="Y110A7A.11.1"/>
    <property type="gene ID" value="WBGene00022460"/>
</dbReference>
<dbReference type="KEGG" id="cel:CELE_Y110A7A.11"/>
<dbReference type="UCSC" id="Y110A7A.11">
    <property type="organism name" value="c. elegans"/>
</dbReference>
<dbReference type="AGR" id="WB:WBGene00022460"/>
<dbReference type="CTD" id="172140"/>
<dbReference type="WormBase" id="Y110A7A.11">
    <property type="protein sequence ID" value="CE34394"/>
    <property type="gene ID" value="WBGene00022460"/>
    <property type="gene designation" value="use-1"/>
</dbReference>
<dbReference type="eggNOG" id="KOG2678">
    <property type="taxonomic scope" value="Eukaryota"/>
</dbReference>
<dbReference type="GeneTree" id="ENSGT00390000014361"/>
<dbReference type="HOGENOM" id="CLU_1107913_0_0_1"/>
<dbReference type="InParanoid" id="Q9N598"/>
<dbReference type="OMA" id="AYRSWCD"/>
<dbReference type="OrthoDB" id="4506189at2759"/>
<dbReference type="PhylomeDB" id="Q9N598"/>
<dbReference type="Reactome" id="R-CEL-6811434">
    <property type="pathway name" value="COPI-dependent Golgi-to-ER retrograde traffic"/>
</dbReference>
<dbReference type="PRO" id="PR:Q9N598"/>
<dbReference type="Proteomes" id="UP000001940">
    <property type="component" value="Chromosome I"/>
</dbReference>
<dbReference type="Bgee" id="WBGene00022460">
    <property type="expression patterns" value="Expressed in germ line (C elegans) and 4 other cell types or tissues"/>
</dbReference>
<dbReference type="GO" id="GO:0005783">
    <property type="term" value="C:endoplasmic reticulum"/>
    <property type="evidence" value="ECO:0000318"/>
    <property type="project" value="GO_Central"/>
</dbReference>
<dbReference type="GO" id="GO:0005789">
    <property type="term" value="C:endoplasmic reticulum membrane"/>
    <property type="evidence" value="ECO:0007669"/>
    <property type="project" value="UniProtKB-SubCell"/>
</dbReference>
<dbReference type="GO" id="GO:0031201">
    <property type="term" value="C:SNARE complex"/>
    <property type="evidence" value="ECO:0000318"/>
    <property type="project" value="GO_Central"/>
</dbReference>
<dbReference type="GO" id="GO:0005484">
    <property type="term" value="F:SNAP receptor activity"/>
    <property type="evidence" value="ECO:0000318"/>
    <property type="project" value="GO_Central"/>
</dbReference>
<dbReference type="GO" id="GO:0015031">
    <property type="term" value="P:protein transport"/>
    <property type="evidence" value="ECO:0007669"/>
    <property type="project" value="UniProtKB-KW"/>
</dbReference>
<dbReference type="GO" id="GO:0006890">
    <property type="term" value="P:retrograde vesicle-mediated transport, Golgi to endoplasmic reticulum"/>
    <property type="evidence" value="ECO:0000318"/>
    <property type="project" value="GO_Central"/>
</dbReference>
<dbReference type="CDD" id="cd15860">
    <property type="entry name" value="SNARE_USE1"/>
    <property type="match status" value="1"/>
</dbReference>
<dbReference type="InterPro" id="IPR019150">
    <property type="entry name" value="Vesicle_transport_protein_Use1"/>
</dbReference>
<dbReference type="PANTHER" id="PTHR13050">
    <property type="entry name" value="USE1-LIKE PROTEIN"/>
    <property type="match status" value="1"/>
</dbReference>
<dbReference type="PANTHER" id="PTHR13050:SF7">
    <property type="entry name" value="VESICLE TRANSPORT PROTEIN USE1"/>
    <property type="match status" value="1"/>
</dbReference>
<dbReference type="Pfam" id="PF09753">
    <property type="entry name" value="Use1"/>
    <property type="match status" value="1"/>
</dbReference>
<evidence type="ECO:0000250" key="1"/>
<evidence type="ECO:0000255" key="2"/>
<evidence type="ECO:0000305" key="3"/>
<comment type="function">
    <text evidence="1">SNARE that may be involved in targeting and fusion of Golgi-derived retrograde transport vesicles with the ER.</text>
</comment>
<comment type="subcellular location">
    <subcellularLocation>
        <location evidence="1">Endoplasmic reticulum membrane</location>
        <topology evidence="1">Single-pass type IV membrane protein</topology>
    </subcellularLocation>
</comment>
<comment type="similarity">
    <text evidence="3">Belongs to the USE1 family.</text>
</comment>
<feature type="chain" id="PRO_0000215583" description="Vesicle transport protein USE1">
    <location>
        <begin position="1"/>
        <end position="254"/>
    </location>
</feature>
<feature type="topological domain" description="Cytoplasmic" evidence="2">
    <location>
        <begin position="1"/>
        <end position="228"/>
    </location>
</feature>
<feature type="transmembrane region" description="Helical; Anchor for type IV membrane protein" evidence="2">
    <location>
        <begin position="229"/>
        <end position="249"/>
    </location>
</feature>
<feature type="topological domain" description="Lumenal" evidence="2">
    <location>
        <begin position="250"/>
        <end position="254"/>
    </location>
</feature>
<sequence>MAYISENELKFLRLLERTKRLTKEDMSANVWKVSAATKILNKMIYTLQNDETTNDILHEYRQEVLQLKLLAEAESKSSAEERLKVIEKIPRVFPDVQVTVADSKNDNEAESYDFEKESAAGLRATQRSIYRSDLRKQLLSSNKHRAQDTSEDQEFMKNELVEEELANSLATMARSFKTMMSAAGDVIKEDTERAILMAKEVDDNKTALGIQSERVERHAYKCGYDCFKVMLIVLIFMSFVSMVLMMKIFKKAST</sequence>
<keyword id="KW-0256">Endoplasmic reticulum</keyword>
<keyword id="KW-0931">ER-Golgi transport</keyword>
<keyword id="KW-0472">Membrane</keyword>
<keyword id="KW-0653">Protein transport</keyword>
<keyword id="KW-1185">Reference proteome</keyword>
<keyword id="KW-0812">Transmembrane</keyword>
<keyword id="KW-1133">Transmembrane helix</keyword>
<keyword id="KW-0813">Transport</keyword>
<reference key="1">
    <citation type="journal article" date="1998" name="Science">
        <title>Genome sequence of the nematode C. elegans: a platform for investigating biology.</title>
        <authorList>
            <consortium name="The C. elegans sequencing consortium"/>
        </authorList>
    </citation>
    <scope>NUCLEOTIDE SEQUENCE [LARGE SCALE GENOMIC DNA]</scope>
    <source>
        <strain>Bristol N2</strain>
    </source>
</reference>
<name>USE1_CAEEL</name>
<organism>
    <name type="scientific">Caenorhabditis elegans</name>
    <dbReference type="NCBI Taxonomy" id="6239"/>
    <lineage>
        <taxon>Eukaryota</taxon>
        <taxon>Metazoa</taxon>
        <taxon>Ecdysozoa</taxon>
        <taxon>Nematoda</taxon>
        <taxon>Chromadorea</taxon>
        <taxon>Rhabditida</taxon>
        <taxon>Rhabditina</taxon>
        <taxon>Rhabditomorpha</taxon>
        <taxon>Rhabditoidea</taxon>
        <taxon>Rhabditidae</taxon>
        <taxon>Peloderinae</taxon>
        <taxon>Caenorhabditis</taxon>
    </lineage>
</organism>
<protein>
    <recommendedName>
        <fullName>Vesicle transport protein USE1</fullName>
    </recommendedName>
    <alternativeName>
        <fullName>USE1-like protein</fullName>
    </alternativeName>
</protein>